<sequence>MPHSSLHPSIPRPRGHRAKKAAFVLLSTCLAALWELGEPADHILRWLVLHLASEQLGLLFKGLCSLAEEIRHVHSRYQGSYWRAFRACLGCPIRCGVLLLLSCYCYTFLPNTAGLPFAWIVALLGLSQALNILLDLQGLAPAVVSTVCEQGNFNVAHGLAWSYYIGYLRLILPGLQARIHTYNQRHNNTVRGTGVHKLYILLPLDCGVPDDLSVADPNIRFLHELPKQSADRAGIKGRVYTNSIYEILENGKPVGTCVLEYATPLQTLFAMSQDSRAGFSREERLEQAKLFCQTLGDILADVPESQYCRLIVYLDAAEGSSFSLSQEILKHLKQEEKEEVTVGTMGSSGVLESSTLDKEPQLLISGMDQPLPLRTDVF</sequence>
<dbReference type="EMBL" id="MF174845">
    <property type="protein sequence ID" value="ATJ03488.1"/>
    <property type="molecule type" value="mRNA"/>
</dbReference>
<dbReference type="SMR" id="A0A291NUI4"/>
<dbReference type="Proteomes" id="UP000472240">
    <property type="component" value="Unplaced"/>
</dbReference>
<dbReference type="GO" id="GO:0000421">
    <property type="term" value="C:autophagosome membrane"/>
    <property type="evidence" value="ECO:0007669"/>
    <property type="project" value="UniProtKB-SubCell"/>
</dbReference>
<dbReference type="GO" id="GO:0031410">
    <property type="term" value="C:cytoplasmic vesicle"/>
    <property type="evidence" value="ECO:0007669"/>
    <property type="project" value="UniProtKB-KW"/>
</dbReference>
<dbReference type="GO" id="GO:0005789">
    <property type="term" value="C:endoplasmic reticulum membrane"/>
    <property type="evidence" value="ECO:0007669"/>
    <property type="project" value="UniProtKB-SubCell"/>
</dbReference>
<dbReference type="GO" id="GO:0033116">
    <property type="term" value="C:endoplasmic reticulum-Golgi intermediate compartment membrane"/>
    <property type="evidence" value="ECO:0007669"/>
    <property type="project" value="UniProtKB-SubCell"/>
</dbReference>
<dbReference type="GO" id="GO:0000139">
    <property type="term" value="C:Golgi membrane"/>
    <property type="evidence" value="ECO:0007669"/>
    <property type="project" value="UniProtKB-SubCell"/>
</dbReference>
<dbReference type="GO" id="GO:0005741">
    <property type="term" value="C:mitochondrial outer membrane"/>
    <property type="evidence" value="ECO:0007669"/>
    <property type="project" value="UniProtKB-SubCell"/>
</dbReference>
<dbReference type="GO" id="GO:0048471">
    <property type="term" value="C:perinuclear region of cytoplasm"/>
    <property type="evidence" value="ECO:0007669"/>
    <property type="project" value="UniProtKB-SubCell"/>
</dbReference>
<dbReference type="GO" id="GO:0005886">
    <property type="term" value="C:plasma membrane"/>
    <property type="evidence" value="ECO:0007669"/>
    <property type="project" value="UniProtKB-SubCell"/>
</dbReference>
<dbReference type="GO" id="GO:0061507">
    <property type="term" value="F:2',3'-cyclic GMP-AMP binding"/>
    <property type="evidence" value="ECO:0007669"/>
    <property type="project" value="TreeGrafter"/>
</dbReference>
<dbReference type="GO" id="GO:0035438">
    <property type="term" value="F:cyclic-di-GMP binding"/>
    <property type="evidence" value="ECO:0007669"/>
    <property type="project" value="TreeGrafter"/>
</dbReference>
<dbReference type="GO" id="GO:0015252">
    <property type="term" value="F:proton channel activity"/>
    <property type="evidence" value="ECO:0000250"/>
    <property type="project" value="UniProtKB"/>
</dbReference>
<dbReference type="GO" id="GO:0035591">
    <property type="term" value="F:signaling adaptor activity"/>
    <property type="evidence" value="ECO:0000250"/>
    <property type="project" value="UniProtKB"/>
</dbReference>
<dbReference type="GO" id="GO:0000045">
    <property type="term" value="P:autophagosome assembly"/>
    <property type="evidence" value="ECO:0000250"/>
    <property type="project" value="UniProtKB"/>
</dbReference>
<dbReference type="GO" id="GO:0140896">
    <property type="term" value="P:cGAS/STING signaling pathway"/>
    <property type="evidence" value="ECO:0000250"/>
    <property type="project" value="UniProtKB"/>
</dbReference>
<dbReference type="GO" id="GO:0051607">
    <property type="term" value="P:defense response to virus"/>
    <property type="evidence" value="ECO:0007669"/>
    <property type="project" value="TreeGrafter"/>
</dbReference>
<dbReference type="GO" id="GO:0045087">
    <property type="term" value="P:innate immune response"/>
    <property type="evidence" value="ECO:0007669"/>
    <property type="project" value="UniProtKB-KW"/>
</dbReference>
<dbReference type="GO" id="GO:0016239">
    <property type="term" value="P:positive regulation of macroautophagy"/>
    <property type="evidence" value="ECO:0007669"/>
    <property type="project" value="TreeGrafter"/>
</dbReference>
<dbReference type="GO" id="GO:0032481">
    <property type="term" value="P:positive regulation of type I interferon production"/>
    <property type="evidence" value="ECO:0007669"/>
    <property type="project" value="InterPro"/>
</dbReference>
<dbReference type="GO" id="GO:0061709">
    <property type="term" value="P:reticulophagy"/>
    <property type="evidence" value="ECO:0007669"/>
    <property type="project" value="TreeGrafter"/>
</dbReference>
<dbReference type="CDD" id="cd22658">
    <property type="entry name" value="STING_C_metazoan-like"/>
    <property type="match status" value="1"/>
</dbReference>
<dbReference type="FunFam" id="1.20.5.5200:FF:000001">
    <property type="entry name" value="Stimulator of interferon genes protein"/>
    <property type="match status" value="1"/>
</dbReference>
<dbReference type="FunFam" id="3.40.50.12100:FF:000001">
    <property type="entry name" value="Stimulator of interferon genes protein"/>
    <property type="match status" value="1"/>
</dbReference>
<dbReference type="Gene3D" id="1.20.5.5200">
    <property type="match status" value="1"/>
</dbReference>
<dbReference type="Gene3D" id="3.40.50.12100">
    <property type="entry name" value="Stimulator of interferon genes protein"/>
    <property type="match status" value="1"/>
</dbReference>
<dbReference type="InterPro" id="IPR029158">
    <property type="entry name" value="STING"/>
</dbReference>
<dbReference type="InterPro" id="IPR047191">
    <property type="entry name" value="STING_C_chordates"/>
</dbReference>
<dbReference type="InterPro" id="IPR038623">
    <property type="entry name" value="STING_C_sf"/>
</dbReference>
<dbReference type="InterPro" id="IPR055432">
    <property type="entry name" value="STING_LBD"/>
</dbReference>
<dbReference type="InterPro" id="IPR055434">
    <property type="entry name" value="STING_TM"/>
</dbReference>
<dbReference type="PANTHER" id="PTHR34339">
    <property type="entry name" value="STIMULATOR OF INTERFERON GENES PROTEIN"/>
    <property type="match status" value="1"/>
</dbReference>
<dbReference type="PANTHER" id="PTHR34339:SF1">
    <property type="entry name" value="STIMULATOR OF INTERFERON GENES PROTEIN"/>
    <property type="match status" value="1"/>
</dbReference>
<dbReference type="Pfam" id="PF15009">
    <property type="entry name" value="STING_LBD"/>
    <property type="match status" value="1"/>
</dbReference>
<dbReference type="Pfam" id="PF23417">
    <property type="entry name" value="STING_TM"/>
    <property type="match status" value="1"/>
</dbReference>
<accession>A0A291NUI4</accession>
<evidence type="ECO:0000250" key="1">
    <source>
        <dbReference type="UniProtKB" id="E1C7U0"/>
    </source>
</evidence>
<evidence type="ECO:0000250" key="2">
    <source>
        <dbReference type="UniProtKB" id="Q3TBT3"/>
    </source>
</evidence>
<evidence type="ECO:0000250" key="3">
    <source>
        <dbReference type="UniProtKB" id="Q86WV6"/>
    </source>
</evidence>
<evidence type="ECO:0000255" key="4"/>
<evidence type="ECO:0000269" key="5">
    <source>
    </source>
</evidence>
<evidence type="ECO:0000303" key="6">
    <source>
    </source>
</evidence>
<evidence type="ECO:0000305" key="7"/>
<reference key="1">
    <citation type="journal article" date="2018" name="Cell Host Microbe">
        <title>Dampened STING-dependent interferon activation in bats.</title>
        <authorList>
            <person name="Xie J."/>
            <person name="Li Y."/>
            <person name="Shen X."/>
            <person name="Goh G."/>
            <person name="Zhu Y."/>
            <person name="Cui J."/>
            <person name="Wang L.F."/>
            <person name="Shi Z.L."/>
            <person name="Zhou P."/>
        </authorList>
    </citation>
    <scope>NUCLEOTIDE SEQUENCE [MRNA]</scope>
    <scope>FUNCTION</scope>
    <scope>MUTAGENESIS OF ASP-357</scope>
</reference>
<proteinExistence type="evidence at protein level"/>
<feature type="chain" id="PRO_5012425882" description="Stimulator of interferon genes protein">
    <location>
        <begin position="1"/>
        <end position="378"/>
    </location>
</feature>
<feature type="transmembrane region" description="Helical" evidence="4">
    <location>
        <begin position="21"/>
        <end position="41"/>
    </location>
</feature>
<feature type="transmembrane region" description="Helical" evidence="4">
    <location>
        <begin position="46"/>
        <end position="66"/>
    </location>
</feature>
<feature type="transmembrane region" description="Helical" evidence="4">
    <location>
        <begin position="89"/>
        <end position="109"/>
    </location>
</feature>
<feature type="transmembrane region" description="Helical" evidence="4">
    <location>
        <begin position="114"/>
        <end position="134"/>
    </location>
</feature>
<feature type="region of interest" description="Cyclic dinucleotide-binding domain (CBD)" evidence="3">
    <location>
        <begin position="153"/>
        <end position="339"/>
    </location>
</feature>
<feature type="region of interest" description="C-terminal tail (CTT)" evidence="3">
    <location>
        <begin position="339"/>
        <end position="378"/>
    </location>
</feature>
<feature type="short sequence motif" description="pLxIS motif" evidence="3">
    <location>
        <begin position="362"/>
        <end position="365"/>
    </location>
</feature>
<feature type="binding site" evidence="3">
    <location>
        <position position="162"/>
    </location>
    <ligand>
        <name>2',3'-cGAMP</name>
        <dbReference type="ChEBI" id="CHEBI:143093"/>
    </ligand>
</feature>
<feature type="binding site" evidence="3">
    <location>
        <position position="162"/>
    </location>
    <ligand>
        <name>3',3'-c-di-GMP</name>
        <dbReference type="ChEBI" id="CHEBI:58805"/>
    </ligand>
</feature>
<feature type="binding site" evidence="3">
    <location>
        <position position="167"/>
    </location>
    <ligand>
        <name>2',3'-cGAMP</name>
        <dbReference type="ChEBI" id="CHEBI:143093"/>
    </ligand>
</feature>
<feature type="binding site" evidence="3">
    <location>
        <position position="167"/>
    </location>
    <ligand>
        <name>2',3'-cUAMP</name>
        <dbReference type="ChEBI" id="CHEBI:228269"/>
    </ligand>
</feature>
<feature type="binding site" evidence="3">
    <location>
        <position position="167"/>
    </location>
    <ligand>
        <name>3',3'-c-di-GMP</name>
        <dbReference type="ChEBI" id="CHEBI:58805"/>
    </ligand>
</feature>
<feature type="binding site" evidence="3">
    <location>
        <begin position="238"/>
        <end position="241"/>
    </location>
    <ligand>
        <name>3',3'-c-di-GMP</name>
        <dbReference type="ChEBI" id="CHEBI:58805"/>
    </ligand>
</feature>
<feature type="binding site" evidence="3">
    <location>
        <position position="238"/>
    </location>
    <ligand>
        <name>2',3'-cGAMP</name>
        <dbReference type="ChEBI" id="CHEBI:143093"/>
    </ligand>
</feature>
<feature type="binding site" evidence="3">
    <location>
        <position position="238"/>
    </location>
    <ligand>
        <name>2',3'-cUAMP</name>
        <dbReference type="ChEBI" id="CHEBI:228269"/>
    </ligand>
</feature>
<feature type="binding site" evidence="3">
    <location>
        <position position="263"/>
    </location>
    <ligand>
        <name>2',3'-cGAMP</name>
        <dbReference type="ChEBI" id="CHEBI:143093"/>
    </ligand>
</feature>
<feature type="binding site" evidence="3">
    <location>
        <position position="263"/>
    </location>
    <ligand>
        <name>2',3'-cUAMP</name>
        <dbReference type="ChEBI" id="CHEBI:228269"/>
    </ligand>
</feature>
<feature type="binding site" evidence="3">
    <location>
        <position position="263"/>
    </location>
    <ligand>
        <name>3',3'-c-di-GMP</name>
        <dbReference type="ChEBI" id="CHEBI:58805"/>
    </ligand>
</feature>
<feature type="site" description="Not phosphorylated" evidence="5">
    <location>
        <position position="357"/>
    </location>
</feature>
<feature type="modified residue" description="Phosphoserine" evidence="3">
    <location>
        <position position="354"/>
    </location>
</feature>
<feature type="modified residue" description="Phosphothreonine" evidence="3">
    <location>
        <position position="355"/>
    </location>
</feature>
<feature type="modified residue" description="Phosphoserine; by TBK1" evidence="3">
    <location>
        <position position="365"/>
    </location>
</feature>
<feature type="lipid moiety-binding region" description="S-palmitoyl cysteine" evidence="2">
    <location>
        <position position="88"/>
    </location>
</feature>
<feature type="lipid moiety-binding region" description="S-palmitoyl cysteine" evidence="2">
    <location>
        <position position="91"/>
    </location>
</feature>
<feature type="mutagenesis site" description="Restores STING1 ability to induce a strong inflammatory response, resulting in type-I interferon activation and virus inhibition." evidence="5">
    <original>D</original>
    <variation>S</variation>
    <location>
        <position position="357"/>
    </location>
</feature>
<gene>
    <name evidence="3" type="primary">STING1</name>
    <name evidence="6" type="synonym">STING</name>
</gene>
<organism>
    <name type="scientific">Rhinolophus ferrumequinum</name>
    <name type="common">Greater horseshoe bat</name>
    <dbReference type="NCBI Taxonomy" id="59479"/>
    <lineage>
        <taxon>Eukaryota</taxon>
        <taxon>Metazoa</taxon>
        <taxon>Chordata</taxon>
        <taxon>Craniata</taxon>
        <taxon>Vertebrata</taxon>
        <taxon>Euteleostomi</taxon>
        <taxon>Mammalia</taxon>
        <taxon>Eutheria</taxon>
        <taxon>Laurasiatheria</taxon>
        <taxon>Chiroptera</taxon>
        <taxon>Yinpterochiroptera</taxon>
        <taxon>Rhinolophoidea</taxon>
        <taxon>Rhinolophidae</taxon>
        <taxon>Rhinolophinae</taxon>
        <taxon>Rhinolophus</taxon>
    </lineage>
</organism>
<keyword id="KW-1003">Cell membrane</keyword>
<keyword id="KW-0963">Cytoplasm</keyword>
<keyword id="KW-0968">Cytoplasmic vesicle</keyword>
<keyword id="KW-0256">Endoplasmic reticulum</keyword>
<keyword id="KW-0333">Golgi apparatus</keyword>
<keyword id="KW-0391">Immunity</keyword>
<keyword id="KW-0399">Innate immunity</keyword>
<keyword id="KW-0407">Ion channel</keyword>
<keyword id="KW-0406">Ion transport</keyword>
<keyword id="KW-0449">Lipoprotein</keyword>
<keyword id="KW-0472">Membrane</keyword>
<keyword id="KW-0496">Mitochondrion</keyword>
<keyword id="KW-1000">Mitochondrion outer membrane</keyword>
<keyword id="KW-0547">Nucleotide-binding</keyword>
<keyword id="KW-0564">Palmitate</keyword>
<keyword id="KW-0597">Phosphoprotein</keyword>
<keyword id="KW-1185">Reference proteome</keyword>
<keyword id="KW-0812">Transmembrane</keyword>
<keyword id="KW-1133">Transmembrane helix</keyword>
<keyword id="KW-0813">Transport</keyword>
<protein>
    <recommendedName>
        <fullName evidence="3">Stimulator of interferon genes protein</fullName>
        <shortName evidence="6">STING</shortName>
    </recommendedName>
</protein>
<comment type="function">
    <text evidence="3 5">Facilitator of innate immune signaling that acts as a sensor of cytosolic DNA from bacteria and viruses and promotes low production of type I interferon (IFN-alpha and IFN-beta) (PubMed:29478775). Compared to other mammals, STING1-dependent type I interferon induction is strongly reduced in bats, suggesting that the cGAS-STING pathway promotes a limited inflammatory response (PubMed:29478775). Innate immune response is triggered in response to non-CpG double-stranded DNA from viruses and bacteria delivered to the cytoplasm (By similarity). Acts by binding cyclic dinucleotides: recognizes and binds cyclic di-GMP (c-di-GMP), a second messenger produced by bacteria, cyclic UMP-AMP (2',3'-cUAMP), and cyclic GMP-AMP (cGAMP), a messenger produced by CGAS in response to DNA virus in the cytosol (By similarity). Upon binding to c-di-GMP, cUAMP or cGAMP, STING1 oligomerizes, translocates from the endoplasmic reticulum and is phosphorylated by TBK1 on the pLxIS motif, leading to recruitment and subsequent activation of the transcription factor IRF3 to induce expression of type I interferon and exert a potent anti-viral state (By similarity). In addition to promote the production of type I interferons, plays a direct role in autophagy (By similarity). Following cGAMP-binding, STING1 buds from the endoplasmic reticulum into COPII vesicles, which then form the endoplasmic reticulum-Golgi intermediate compartment (ERGIC) (By similarity). The ERGIC serves as the membrane source for WIPI2 recruitment and LC3 lipidation, leading to formation of autophagosomes that target cytosolic DNA or DNA viruses for degradation by the lysosome (By similarity). Promotes autophagy by acting as a proton channel that directs proton efflux from the Golgi to facilitate MAP1LC3B/LC3B lipidation (By similarity). The autophagy- and interferon-inducing activities can be uncoupled and autophagy induction is independent of TBK1 phosphorylation (By similarity).</text>
</comment>
<comment type="catalytic activity">
    <reaction evidence="3">
        <text>H(+)(in) = H(+)(out)</text>
        <dbReference type="Rhea" id="RHEA:34979"/>
        <dbReference type="ChEBI" id="CHEBI:15378"/>
    </reaction>
</comment>
<comment type="subunit">
    <text evidence="3">Homodimer; forms a homodimer in absence of cyclic nucleotide (c-di-GMP or cGAMP) (By similarity). Homotetramer; in presence of cyclic nucleotide (c-di-GMP or cGAMP), forms tetramers and higher-order oligomers through side-by-side packing (By similarity). Interacts (when phosphorylated) with IRF3; following activation and phosphorylation on the pLxIS motif by TBK1, recruits IRF3 (By similarity). Interacts with TBK1; when homodimer, leading to subsequent production of IFN-beta (By similarity).</text>
</comment>
<comment type="subcellular location">
    <subcellularLocation>
        <location evidence="2">Endoplasmic reticulum membrane</location>
        <topology evidence="4">Multi-pass membrane protein</topology>
    </subcellularLocation>
    <subcellularLocation>
        <location evidence="3">Cytoplasm</location>
        <location evidence="3">Perinuclear region</location>
    </subcellularLocation>
    <subcellularLocation>
        <location evidence="2">Endoplasmic reticulum-Golgi intermediate compartment membrane</location>
        <topology evidence="4">Multi-pass membrane protein</topology>
    </subcellularLocation>
    <subcellularLocation>
        <location evidence="3">Golgi apparatus membrane</location>
        <topology evidence="4">Multi-pass membrane protein</topology>
    </subcellularLocation>
    <subcellularLocation>
        <location evidence="2">Cytoplasmic vesicle</location>
        <location evidence="2">Autophagosome membrane</location>
        <topology evidence="4">Multi-pass membrane protein</topology>
    </subcellularLocation>
    <subcellularLocation>
        <location evidence="2">Mitochondrion outer membrane</location>
        <topology evidence="4">Multi-pass membrane protein</topology>
    </subcellularLocation>
    <subcellularLocation>
        <location evidence="2">Cell membrane</location>
        <topology evidence="4">Multi-pass membrane protein</topology>
    </subcellularLocation>
    <text evidence="3">In response to double-stranded DNA stimulation, translocates from the endoplasmic reticulum through the endoplasmic reticulum-Golgi intermediate compartment and Golgi to post-Golgi vesicles, where the kinase TBK1 is recruited (By similarity). Upon cGAMP-binding, translocates to the endoplasmic reticulum-Golgi intermediate compartment (ERGIC) in a process that is dependent on COPII vesicles; STING1-containing ERGIC serves as a membrane source for LC3 lipidation, which is a key step in autophagosome biogenesis (By similarity).</text>
</comment>
<comment type="domain">
    <text evidence="1 3">In absence of cGAMP, the transmembrane and cytoplasmic regions interact to form an integrated, domain-swapped dimeric assembly (By similarity). In absence of cyclic nucleotide (c-di-GMP or cGAMP), the protein is autoinhibited by an intramolecular interaction between the cyclic dinucleotide-binding domain (CBD) and the C-terminal tail (CTT) (By similarity). Following cGAMP-binding, the cyclic dinucleotide-binding domain (CBD) is closed, leading to a 180 degrees rotation of the CBD domain relative to the transmembrane domain. This rotation is coupled to a conformational change in a loop on the side of the CBD dimer, which leads to the formation of the STING1 tetramer and higher-order oligomers through side-by-side packing (By similarity).</text>
</comment>
<comment type="domain">
    <text evidence="3">The pLxIS motif constitutes an IRF3-binding motif: following phosphorylation by TBK1, the phosphorylated pLxIS motif of STING1 recruits IRF3 (By similarity). IRF3 is then phosphorylated and activated by TBK1 to induce type-I interferons and other cytokines (By similarity).</text>
</comment>
<comment type="domain">
    <text evidence="3">The N-terminal domain interacts with glycerophospholipids and phospholipids.</text>
</comment>
<comment type="PTM">
    <text evidence="3 5">Phosphorylation by TBK1 leads to activation and production of IFN-beta (By similarity). Following cyclic nucleotide (c-di-GMP or cGAMP)-binding, activation and translocation from the endoplasmic reticulum, STING1 is phosphorylated by TBK1 at Ser-365 in the pLxIS motif (By similarity). The phosphorylated pLxIS motif constitutes an IRF3-binding motif, leading to recruitment of the transcription factor IRF3 to induce type-I interferons and other cytokines (By similarity). In contrast, lacks phosphorylation site at position 357, leading to reduced production of type-I interferons and other cytokines (PubMed:29478775).</text>
</comment>
<comment type="similarity">
    <text evidence="7">Belongs to the STING family.</text>
</comment>
<comment type="caution">
    <text evidence="5">The cGAS-STING pathway promotes a limited inflammatory response in bats (PubMed:29478775). This may be caused by the absence of the phosphorylation site at position 357, which is required to production of type-I interferons and other cytokines in other species (PubMed:29478775). The dampened cGAS-STING pathway may explain why bats show an increased tolerance to highly pathogenic viruses, such as coronaviruses, and serve as a virus reservoir (PubMed:29478775).</text>
</comment>
<name>STING_RHIFE</name>